<evidence type="ECO:0000250" key="1">
    <source>
        <dbReference type="UniProtKB" id="B6D9A8"/>
    </source>
</evidence>
<evidence type="ECO:0000250" key="2">
    <source>
        <dbReference type="UniProtKB" id="P0A9J4"/>
    </source>
</evidence>
<evidence type="ECO:0000269" key="3">
    <source>
    </source>
</evidence>
<evidence type="ECO:0000269" key="4">
    <source>
    </source>
</evidence>
<evidence type="ECO:0000303" key="5">
    <source>
    </source>
</evidence>
<evidence type="ECO:0000305" key="6"/>
<organism>
    <name type="scientific">Gibberella intermedia</name>
    <name type="common">Bulb rot disease fungus</name>
    <name type="synonym">Fusarium proliferatum</name>
    <dbReference type="NCBI Taxonomy" id="948311"/>
    <lineage>
        <taxon>Eukaryota</taxon>
        <taxon>Fungi</taxon>
        <taxon>Dikarya</taxon>
        <taxon>Ascomycota</taxon>
        <taxon>Pezizomycotina</taxon>
        <taxon>Sordariomycetes</taxon>
        <taxon>Hypocreomycetidae</taxon>
        <taxon>Hypocreales</taxon>
        <taxon>Nectriaceae</taxon>
        <taxon>Fusarium</taxon>
        <taxon>Fusarium fujikuroi species complex</taxon>
    </lineage>
</organism>
<sequence>MTSQEHPNWLTALLVDTRPPPKLFAWSPANIQPKLDEGIDMGSSNSDEEYDNDACVCQSTDSDQRIYIIGPGNIGRLYATHMARHPNALPITLVVHRKELLSQWVACEGVGLADITSGKLFLNKGFTVEWWTETRPPYGPVKEVADGKKLHNVFISTKAEAGLAEADRIRRYLGRCSSVVFAQNGVCKLWPPHGPLYISHRYPSGDTPTFSACVVSHGVASAGPFLSVHAAPADAYIGPVFWASDPESPWRHPSDDFFIRHIATTPHVNTKQVSSGEIWLLQLEKLVMNAAINPLTALLRCKTGELFTSYGSDDPLALVIDKLLWQTSAVIQGLVDHKTSHSVITSYAEHMSQPGTSCSVPKVRKKLMERFSQPILKAKLGWEEDRDTGL</sequence>
<comment type="function">
    <text evidence="1 3 4">Ketoisovalerate reductase; part of the gene cluster that mediates the biosynthesis of beauvericin (BEA), a non-ribosomal cyclic hexadepsipeptide that shows antibiotic, antifungal, insecticidal, and cancer cell antiproliferative and antihaptotactic activity (PubMed:22916830, PubMed:23832252). Ketoisovalerate reductase BEA2 catalyzes the NADPH-specific reduction of ketoisovaleric acid to hydroxyisovalerate, a precursor for beauvericin biosynthesis (PubMed:22916830, PubMed:23832252). The nonribosomal cyclodepsipeptide synthetase BEA1 then catalyzes the formation of beauvericin via condensation and cyclization of 3 dipeptidol monomers, each composed of one unit of hydroxyisovalerate and one unit of N-methyl-phenylalanine (By similarity).</text>
</comment>
<comment type="catalytic activity">
    <reaction evidence="3">
        <text>(R)-2-hydroxy-3-methylbutanoate + NADP(+) = 3-methyl-2-oxobutanoate + NADPH + H(+)</text>
        <dbReference type="Rhea" id="RHEA:62268"/>
        <dbReference type="ChEBI" id="CHEBI:11851"/>
        <dbReference type="ChEBI" id="CHEBI:15378"/>
        <dbReference type="ChEBI" id="CHEBI:57783"/>
        <dbReference type="ChEBI" id="CHEBI:58349"/>
        <dbReference type="ChEBI" id="CHEBI:145660"/>
    </reaction>
</comment>
<comment type="activity regulation">
    <text evidence="3">The reductase activity is increased by Mg(2+) (195%), Ca(2+) (169%) and slightly increased by K(+) (123%) (PubMed:22916830). The reduction activity is inhibited by Fe(2+) and Co(2+), and almost totally inhibited by Cu(2+), Mn(2+), Zn(2+) and Fe(3+) (from 3% to 9% residual activity respectively) (PubMed:22916830). The chelating agent EDTA had little effect, suggesting Mg(2+) and Ca(2+) are not determining factors, though they could promote the reductase enzyme activity (PubMed:22916830).</text>
</comment>
<comment type="biophysicochemical properties">
    <phDependence>
        <text evidence="3">Optimum pH is 7.5.</text>
    </phDependence>
    <temperatureDependence>
        <text evidence="3">Optimum temperature is 35 degrees Celsius.</text>
    </temperatureDependence>
</comment>
<comment type="similarity">
    <text evidence="6">Belongs to the ketopantoate reductase family.</text>
</comment>
<dbReference type="EC" id="1.2.7.-" evidence="3"/>
<dbReference type="EMBL" id="JF826561">
    <property type="protein sequence ID" value="AEN14637.1"/>
    <property type="molecule type" value="Genomic_DNA"/>
</dbReference>
<dbReference type="SMR" id="G3GBU6"/>
<dbReference type="GO" id="GO:0005739">
    <property type="term" value="C:mitochondrion"/>
    <property type="evidence" value="ECO:0007669"/>
    <property type="project" value="TreeGrafter"/>
</dbReference>
<dbReference type="GO" id="GO:0008677">
    <property type="term" value="F:2-dehydropantoate 2-reductase activity"/>
    <property type="evidence" value="ECO:0007669"/>
    <property type="project" value="TreeGrafter"/>
</dbReference>
<dbReference type="GO" id="GO:0050661">
    <property type="term" value="F:NADP binding"/>
    <property type="evidence" value="ECO:0007669"/>
    <property type="project" value="TreeGrafter"/>
</dbReference>
<dbReference type="Gene3D" id="1.10.1040.10">
    <property type="entry name" value="N-(1-d-carboxylethyl)-l-norvaline Dehydrogenase, domain 2"/>
    <property type="match status" value="1"/>
</dbReference>
<dbReference type="Gene3D" id="3.40.50.720">
    <property type="entry name" value="NAD(P)-binding Rossmann-like Domain"/>
    <property type="match status" value="1"/>
</dbReference>
<dbReference type="InterPro" id="IPR008927">
    <property type="entry name" value="6-PGluconate_DH-like_C_sf"/>
</dbReference>
<dbReference type="InterPro" id="IPR013328">
    <property type="entry name" value="6PGD_dom2"/>
</dbReference>
<dbReference type="InterPro" id="IPR050838">
    <property type="entry name" value="Ketopantoate_reductase"/>
</dbReference>
<dbReference type="InterPro" id="IPR013752">
    <property type="entry name" value="KPA_reductase"/>
</dbReference>
<dbReference type="InterPro" id="IPR013332">
    <property type="entry name" value="KPR_N"/>
</dbReference>
<dbReference type="PANTHER" id="PTHR43765:SF2">
    <property type="entry name" value="2-DEHYDROPANTOATE 2-REDUCTASE"/>
    <property type="match status" value="1"/>
</dbReference>
<dbReference type="PANTHER" id="PTHR43765">
    <property type="entry name" value="2-DEHYDROPANTOATE 2-REDUCTASE-RELATED"/>
    <property type="match status" value="1"/>
</dbReference>
<dbReference type="Pfam" id="PF02558">
    <property type="entry name" value="ApbA"/>
    <property type="match status" value="1"/>
</dbReference>
<dbReference type="Pfam" id="PF08546">
    <property type="entry name" value="ApbA_C"/>
    <property type="match status" value="1"/>
</dbReference>
<dbReference type="SUPFAM" id="SSF48179">
    <property type="entry name" value="6-phosphogluconate dehydrogenase C-terminal domain-like"/>
    <property type="match status" value="1"/>
</dbReference>
<keyword id="KW-0521">NADP</keyword>
<keyword id="KW-0560">Oxidoreductase</keyword>
<proteinExistence type="evidence at protein level"/>
<protein>
    <recommendedName>
        <fullName evidence="5">Ketoisovalerate reductase BEA2</fullName>
        <shortName evidence="5">KIVR</shortName>
        <ecNumber evidence="3">1.2.7.-</ecNumber>
    </recommendedName>
</protein>
<name>BEA2_GIBIN</name>
<accession>G3GBU6</accession>
<feature type="chain" id="PRO_0000442153" description="Ketoisovalerate reductase BEA2">
    <location>
        <begin position="1"/>
        <end position="390"/>
    </location>
</feature>
<feature type="active site" description="Proton donor" evidence="2">
    <location>
        <position position="285"/>
    </location>
</feature>
<feature type="binding site" evidence="2">
    <location>
        <begin position="70"/>
        <end position="75"/>
    </location>
    <ligand>
        <name>NADP(+)</name>
        <dbReference type="ChEBI" id="CHEBI:58349"/>
    </ligand>
</feature>
<feature type="binding site" evidence="2">
    <location>
        <position position="289"/>
    </location>
    <ligand>
        <name>substrate</name>
    </ligand>
</feature>
<feature type="binding site" evidence="2">
    <location>
        <position position="293"/>
    </location>
    <ligand>
        <name>substrate</name>
    </ligand>
</feature>
<reference key="1">
    <citation type="journal article" date="2013" name="Sci. China Life Sci.">
        <title>Cloning and characterization of the gene cluster required for beauvericin biosynthesis in Fusarium proliferatum.</title>
        <authorList>
            <person name="Zhang T."/>
            <person name="Zhuo Y."/>
            <person name="Jia X."/>
            <person name="Liu J."/>
            <person name="Gao H."/>
            <person name="Song F."/>
            <person name="Liu M."/>
            <person name="Zhang L."/>
        </authorList>
    </citation>
    <scope>NUCLEOTIDE SEQUENCE [GENOMIC DNA]</scope>
    <scope>FUNCTION</scope>
    <source>
        <strain>LF061</strain>
    </source>
</reference>
<reference key="2">
    <citation type="journal article" date="2012" name="BMC Biotechnol.">
        <title>Cloning and characterization of a novel 2-ketoisovalerate reductase from the beauvericin producer Fusarium proliferatum LF061.</title>
        <authorList>
            <person name="Zhang T."/>
            <person name="Jia X."/>
            <person name="Zhuo Y."/>
            <person name="Liu M."/>
            <person name="Gao H."/>
            <person name="Liu J."/>
            <person name="Zhang L."/>
        </authorList>
    </citation>
    <scope>FUNCTION</scope>
    <scope>CATALYTIC ACTIVITY</scope>
    <scope>BIOPHYSICOCHEMICAL PROPERTIES</scope>
    <scope>ACTIVITY REGULATION</scope>
    <source>
        <strain>LF061</strain>
    </source>
</reference>